<keyword id="KW-0963">Cytoplasm</keyword>
<keyword id="KW-0488">Methylation</keyword>
<keyword id="KW-0648">Protein biosynthesis</keyword>
<keyword id="KW-0688">Ribosomal frameshifting</keyword>
<dbReference type="EMBL" id="AE015929">
    <property type="protein sequence ID" value="AAO04133.1"/>
    <property type="status" value="ALT_SEQ"/>
    <property type="molecule type" value="Genomic_DNA"/>
</dbReference>
<dbReference type="RefSeq" id="NP_764091.1">
    <property type="nucleotide sequence ID" value="NC_004461.1"/>
</dbReference>
<dbReference type="SMR" id="Q8CPZ1"/>
<dbReference type="KEGG" id="sep:SE_0536"/>
<dbReference type="PATRIC" id="fig|176280.10.peg.508"/>
<dbReference type="eggNOG" id="COG1186">
    <property type="taxonomic scope" value="Bacteria"/>
</dbReference>
<dbReference type="HOGENOM" id="CLU_036856_6_0_9"/>
<dbReference type="OrthoDB" id="9806673at2"/>
<dbReference type="Proteomes" id="UP000001411">
    <property type="component" value="Chromosome"/>
</dbReference>
<dbReference type="GO" id="GO:0005737">
    <property type="term" value="C:cytoplasm"/>
    <property type="evidence" value="ECO:0007669"/>
    <property type="project" value="UniProtKB-SubCell"/>
</dbReference>
<dbReference type="GO" id="GO:0016149">
    <property type="term" value="F:translation release factor activity, codon specific"/>
    <property type="evidence" value="ECO:0007669"/>
    <property type="project" value="UniProtKB-UniRule"/>
</dbReference>
<dbReference type="GO" id="GO:0075523">
    <property type="term" value="P:viral translational frameshifting"/>
    <property type="evidence" value="ECO:0007669"/>
    <property type="project" value="UniProtKB-KW"/>
</dbReference>
<dbReference type="FunFam" id="3.30.160.20:FF:000010">
    <property type="entry name" value="Peptide chain release factor 2"/>
    <property type="match status" value="1"/>
</dbReference>
<dbReference type="Gene3D" id="3.30.160.20">
    <property type="match status" value="1"/>
</dbReference>
<dbReference type="Gene3D" id="3.30.70.1660">
    <property type="match status" value="1"/>
</dbReference>
<dbReference type="Gene3D" id="1.20.58.410">
    <property type="entry name" value="Release factor"/>
    <property type="match status" value="1"/>
</dbReference>
<dbReference type="HAMAP" id="MF_00094">
    <property type="entry name" value="Rel_fac_2"/>
    <property type="match status" value="1"/>
</dbReference>
<dbReference type="InterPro" id="IPR005139">
    <property type="entry name" value="PCRF"/>
</dbReference>
<dbReference type="InterPro" id="IPR000352">
    <property type="entry name" value="Pep_chain_release_fac_I"/>
</dbReference>
<dbReference type="InterPro" id="IPR045853">
    <property type="entry name" value="Pep_chain_release_fac_I_sf"/>
</dbReference>
<dbReference type="InterPro" id="IPR004374">
    <property type="entry name" value="PrfB"/>
</dbReference>
<dbReference type="NCBIfam" id="TIGR00020">
    <property type="entry name" value="prfB"/>
    <property type="match status" value="1"/>
</dbReference>
<dbReference type="PANTHER" id="PTHR43116:SF3">
    <property type="entry name" value="CLASS I PEPTIDE CHAIN RELEASE FACTOR"/>
    <property type="match status" value="1"/>
</dbReference>
<dbReference type="PANTHER" id="PTHR43116">
    <property type="entry name" value="PEPTIDE CHAIN RELEASE FACTOR 2"/>
    <property type="match status" value="1"/>
</dbReference>
<dbReference type="Pfam" id="PF03462">
    <property type="entry name" value="PCRF"/>
    <property type="match status" value="1"/>
</dbReference>
<dbReference type="Pfam" id="PF00472">
    <property type="entry name" value="RF-1"/>
    <property type="match status" value="1"/>
</dbReference>
<dbReference type="SMART" id="SM00937">
    <property type="entry name" value="PCRF"/>
    <property type="match status" value="1"/>
</dbReference>
<dbReference type="SUPFAM" id="SSF75620">
    <property type="entry name" value="Release factor"/>
    <property type="match status" value="1"/>
</dbReference>
<dbReference type="PROSITE" id="PS00745">
    <property type="entry name" value="RF_PROK_I"/>
    <property type="match status" value="1"/>
</dbReference>
<sequence>MELSEIKRNLEEYQNHLNQIRGSLDLENKETNIQEYEEMMTDPDFWNDQTKAQDIIDKNNALKSIVNGYYQLTNAVDDMSATRELLQEEYDEDMKIELEEEVQQFEEQIDQYELQLLLDGPHDANNAILELHPGAGGTESQDWVSMLLRMYQRYCEQNGFKVETVDYLPGDEAGVKSVTLLIKGHNAYGYLKAEKGVHRLVRISPFDSSGRRHTSFASCDVIPDFNNDEIEIEINPDDITVDTFRASGAGGQHINKTESAIRITHHPTGIVVNNQNERSQIKNREAAMKMLKSKLYQLKLEEQEQEMAEIRGEQKDIGWGSQIRSYVFHPYSMIKDHRTNEETGKVDAVMDGEIGPFIEAYLRKEMDSRDV</sequence>
<organism>
    <name type="scientific">Staphylococcus epidermidis (strain ATCC 12228 / FDA PCI 1200)</name>
    <dbReference type="NCBI Taxonomy" id="176280"/>
    <lineage>
        <taxon>Bacteria</taxon>
        <taxon>Bacillati</taxon>
        <taxon>Bacillota</taxon>
        <taxon>Bacilli</taxon>
        <taxon>Bacillales</taxon>
        <taxon>Staphylococcaceae</taxon>
        <taxon>Staphylococcus</taxon>
    </lineage>
</organism>
<accession>Q8CPZ1</accession>
<gene>
    <name type="primary">prfB</name>
    <name type="ordered locus">SE_0536</name>
</gene>
<proteinExistence type="inferred from homology"/>
<comment type="function">
    <text evidence="1">Peptide chain release factor 2 directs the termination of translation in response to the peptide chain termination codons UGA and UAA.</text>
</comment>
<comment type="subcellular location">
    <subcellularLocation>
        <location evidence="1">Cytoplasm</location>
    </subcellularLocation>
</comment>
<comment type="PTM">
    <text evidence="1">Methylated by PrmC. Methylation increases the termination efficiency of RF2 (By similarity).</text>
</comment>
<comment type="miscellaneous">
    <text evidence="1">The gene for this protein contains a UGA in-frame termination codon after Leu-24; a naturally occurring frameshift enables complete translation of RF-2. This provides a mechanism for the protein to regulate its own production (By similarity).</text>
</comment>
<comment type="similarity">
    <text evidence="2">Belongs to the prokaryotic/mitochondrial release factor family.</text>
</comment>
<evidence type="ECO:0000250" key="1"/>
<evidence type="ECO:0000305" key="2"/>
<reference key="1">
    <citation type="journal article" date="2003" name="Mol. Microbiol.">
        <title>Genome-based analysis of virulence genes in a non-biofilm-forming Staphylococcus epidermidis strain (ATCC 12228).</title>
        <authorList>
            <person name="Zhang Y.-Q."/>
            <person name="Ren S.-X."/>
            <person name="Li H.-L."/>
            <person name="Wang Y.-X."/>
            <person name="Fu G."/>
            <person name="Yang J."/>
            <person name="Qin Z.-Q."/>
            <person name="Miao Y.-G."/>
            <person name="Wang W.-Y."/>
            <person name="Chen R.-S."/>
            <person name="Shen Y."/>
            <person name="Chen Z."/>
            <person name="Yuan Z.-H."/>
            <person name="Zhao G.-P."/>
            <person name="Qu D."/>
            <person name="Danchin A."/>
            <person name="Wen Y.-M."/>
        </authorList>
    </citation>
    <scope>NUCLEOTIDE SEQUENCE [LARGE SCALE GENOMIC DNA]</scope>
    <source>
        <strain>ATCC 12228 / FDA PCI 1200</strain>
    </source>
</reference>
<protein>
    <recommendedName>
        <fullName>Peptide chain release factor 2</fullName>
        <shortName>RF-2</shortName>
    </recommendedName>
</protein>
<feature type="chain" id="PRO_0000166850" description="Peptide chain release factor 2">
    <location>
        <begin position="1"/>
        <end position="371"/>
    </location>
</feature>
<feature type="modified residue" description="N5-methylglutamine" evidence="1">
    <location>
        <position position="252"/>
    </location>
</feature>
<name>RF2_STAES</name>